<protein>
    <recommendedName>
        <fullName>Histone deacetylase complex subunit SAP18</fullName>
    </recommendedName>
    <alternativeName>
        <fullName>18 kDa Sin3-associated polypeptide</fullName>
    </alternativeName>
    <alternativeName>
        <fullName>2HOR0202</fullName>
    </alternativeName>
    <alternativeName>
        <fullName>Cell growth-inhibiting gene 38 protein</fullName>
    </alternativeName>
    <alternativeName>
        <fullName>Sin3-associated polypeptide p18</fullName>
    </alternativeName>
</protein>
<proteinExistence type="evidence at protein level"/>
<accession>O00422</accession>
<accession>B2R494</accession>
<accession>Q2TTR4</accession>
<accession>Q6IAW9</accession>
<accession>Q8N606</accession>
<accession>Q9UF14</accession>
<accession>X6RAL5</accession>
<name>SAP18_HUMAN</name>
<dbReference type="EMBL" id="U96915">
    <property type="protein sequence ID" value="AAC51322.1"/>
    <property type="molecule type" value="mRNA"/>
</dbReference>
<dbReference type="EMBL" id="U78303">
    <property type="protein sequence ID" value="AAF21220.1"/>
    <property type="molecule type" value="mRNA"/>
</dbReference>
<dbReference type="EMBL" id="AF153608">
    <property type="protein sequence ID" value="AAD41090.1"/>
    <property type="molecule type" value="mRNA"/>
</dbReference>
<dbReference type="EMBL" id="AY550970">
    <property type="protein sequence ID" value="AAT52216.1"/>
    <property type="molecule type" value="mRNA"/>
</dbReference>
<dbReference type="EMBL" id="CR457035">
    <property type="protein sequence ID" value="CAG33316.1"/>
    <property type="molecule type" value="mRNA"/>
</dbReference>
<dbReference type="EMBL" id="AK311748">
    <property type="protein sequence ID" value="BAG34691.1"/>
    <property type="molecule type" value="mRNA"/>
</dbReference>
<dbReference type="EMBL" id="AL158032">
    <property type="status" value="NOT_ANNOTATED_CDS"/>
    <property type="molecule type" value="Genomic_DNA"/>
</dbReference>
<dbReference type="EMBL" id="CH471075">
    <property type="protein sequence ID" value="EAX08291.1"/>
    <property type="molecule type" value="Genomic_DNA"/>
</dbReference>
<dbReference type="EMBL" id="BC030836">
    <property type="protein sequence ID" value="AAH30836.1"/>
    <property type="molecule type" value="mRNA"/>
</dbReference>
<dbReference type="CCDS" id="CCDS9295.2">
    <molecule id="O00422-2"/>
</dbReference>
<dbReference type="RefSeq" id="NP_005861.2">
    <molecule id="O00422-2"/>
    <property type="nucleotide sequence ID" value="NM_005870.5"/>
</dbReference>
<dbReference type="RefSeq" id="XP_054229977.1">
    <molecule id="O00422-2"/>
    <property type="nucleotide sequence ID" value="XM_054374002.1"/>
</dbReference>
<dbReference type="PDB" id="2HDE">
    <property type="method" value="NMR"/>
    <property type="chains" value="A=6-149"/>
</dbReference>
<dbReference type="PDBsum" id="2HDE"/>
<dbReference type="BMRB" id="O00422"/>
<dbReference type="SMR" id="O00422"/>
<dbReference type="BioGRID" id="115573">
    <property type="interactions" value="513"/>
</dbReference>
<dbReference type="ComplexPortal" id="CPX-2256">
    <property type="entry name" value="ASAP splicing-associated complex"/>
</dbReference>
<dbReference type="ComplexPortal" id="CPX-2257">
    <property type="entry name" value="PSAP splicing-associated complex"/>
</dbReference>
<dbReference type="CORUM" id="O00422"/>
<dbReference type="DIP" id="DIP-33590N"/>
<dbReference type="FunCoup" id="O00422">
    <property type="interactions" value="3903"/>
</dbReference>
<dbReference type="IntAct" id="O00422">
    <property type="interactions" value="135"/>
</dbReference>
<dbReference type="MINT" id="O00422"/>
<dbReference type="STRING" id="9606.ENSP00000481842"/>
<dbReference type="TCDB" id="3.A.18.1.1">
    <property type="family name" value="the nuclear mrna exporter (mrna-e) family"/>
</dbReference>
<dbReference type="GlyGen" id="O00422">
    <property type="glycosylation" value="3 sites, 1 O-linked glycan (2 sites)"/>
</dbReference>
<dbReference type="iPTMnet" id="O00422"/>
<dbReference type="PhosphoSitePlus" id="O00422"/>
<dbReference type="SwissPalm" id="O00422"/>
<dbReference type="BioMuta" id="SAP18"/>
<dbReference type="jPOST" id="O00422"/>
<dbReference type="MassIVE" id="O00422"/>
<dbReference type="PaxDb" id="9606-ENSP00000481842"/>
<dbReference type="PeptideAtlas" id="O00422"/>
<dbReference type="ProteomicsDB" id="47879"/>
<dbReference type="Pumba" id="O00422"/>
<dbReference type="Antibodypedia" id="1801">
    <property type="antibodies" value="167 antibodies from 26 providers"/>
</dbReference>
<dbReference type="DNASU" id="10284"/>
<dbReference type="Ensembl" id="ENST00000382533.9">
    <molecule id="O00422-2"/>
    <property type="protein sequence ID" value="ENSP00000371973.4"/>
    <property type="gene ID" value="ENSG00000150459.13"/>
</dbReference>
<dbReference type="Ensembl" id="ENST00000607003.5">
    <molecule id="O00422-1"/>
    <property type="protein sequence ID" value="ENSP00000475925.1"/>
    <property type="gene ID" value="ENSG00000150459.13"/>
</dbReference>
<dbReference type="Ensembl" id="ENST00000621421.4">
    <molecule id="O00422-2"/>
    <property type="protein sequence ID" value="ENSP00000481842.1"/>
    <property type="gene ID" value="ENSG00000150459.13"/>
</dbReference>
<dbReference type="GeneID" id="10284"/>
<dbReference type="KEGG" id="hsa:10284"/>
<dbReference type="MANE-Select" id="ENST00000382533.9">
    <molecule id="O00422-2"/>
    <property type="protein sequence ID" value="ENSP00000371973.4"/>
    <property type="RefSeq nucleotide sequence ID" value="NM_005870.5"/>
    <property type="RefSeq protein sequence ID" value="NP_005861.2"/>
</dbReference>
<dbReference type="UCSC" id="uc001uns.4">
    <property type="organism name" value="human"/>
</dbReference>
<dbReference type="UCSC" id="uc058vux.1">
    <molecule id="O00422-1"/>
    <property type="organism name" value="human"/>
</dbReference>
<dbReference type="AGR" id="HGNC:10530"/>
<dbReference type="CTD" id="10284"/>
<dbReference type="DisGeNET" id="10284"/>
<dbReference type="GeneCards" id="SAP18"/>
<dbReference type="HGNC" id="HGNC:10530">
    <property type="gene designation" value="SAP18"/>
</dbReference>
<dbReference type="HPA" id="ENSG00000150459">
    <property type="expression patterns" value="Low tissue specificity"/>
</dbReference>
<dbReference type="MIM" id="602949">
    <property type="type" value="gene"/>
</dbReference>
<dbReference type="neXtProt" id="NX_O00422"/>
<dbReference type="OpenTargets" id="ENSG00000150459"/>
<dbReference type="PharmGKB" id="PA34940"/>
<dbReference type="VEuPathDB" id="HostDB:ENSG00000150459"/>
<dbReference type="eggNOG" id="KOG3391">
    <property type="taxonomic scope" value="Eukaryota"/>
</dbReference>
<dbReference type="GeneTree" id="ENSGT00390000003152"/>
<dbReference type="HOGENOM" id="CLU_108681_0_1_1"/>
<dbReference type="InParanoid" id="O00422"/>
<dbReference type="OMA" id="TYRMREI"/>
<dbReference type="OrthoDB" id="440566at2759"/>
<dbReference type="PAN-GO" id="O00422">
    <property type="GO annotations" value="4 GO annotations based on evolutionary models"/>
</dbReference>
<dbReference type="PhylomeDB" id="O00422"/>
<dbReference type="TreeFam" id="TF313032"/>
<dbReference type="PathwayCommons" id="O00422"/>
<dbReference type="Reactome" id="R-HSA-3214815">
    <property type="pathway name" value="HDACs deacetylate histones"/>
</dbReference>
<dbReference type="Reactome" id="R-HSA-427413">
    <property type="pathway name" value="NoRC negatively regulates rRNA expression"/>
</dbReference>
<dbReference type="Reactome" id="R-HSA-72163">
    <property type="pathway name" value="mRNA Splicing - Major Pathway"/>
</dbReference>
<dbReference type="Reactome" id="R-HSA-9679191">
    <property type="pathway name" value="Potential therapeutics for SARS"/>
</dbReference>
<dbReference type="SignaLink" id="O00422"/>
<dbReference type="SIGNOR" id="O00422"/>
<dbReference type="BioGRID-ORCS" id="10284">
    <property type="hits" value="758 hits in 1165 CRISPR screens"/>
</dbReference>
<dbReference type="CD-CODE" id="804901D1">
    <property type="entry name" value="Nuclear speckle"/>
</dbReference>
<dbReference type="CD-CODE" id="91857CE7">
    <property type="entry name" value="Nucleolus"/>
</dbReference>
<dbReference type="ChiTaRS" id="SAP18">
    <property type="organism name" value="human"/>
</dbReference>
<dbReference type="EvolutionaryTrace" id="O00422"/>
<dbReference type="GeneWiki" id="SAP18"/>
<dbReference type="GenomeRNAi" id="10284"/>
<dbReference type="Pharos" id="O00422">
    <property type="development level" value="Tbio"/>
</dbReference>
<dbReference type="PRO" id="PR:O00422"/>
<dbReference type="Proteomes" id="UP000005640">
    <property type="component" value="Chromosome 13"/>
</dbReference>
<dbReference type="RNAct" id="O00422">
    <property type="molecule type" value="protein"/>
</dbReference>
<dbReference type="Bgee" id="ENSG00000150459">
    <property type="expression patterns" value="Expressed in adult organism and 216 other cell types or tissues"/>
</dbReference>
<dbReference type="ExpressionAtlas" id="O00422">
    <property type="expression patterns" value="baseline and differential"/>
</dbReference>
<dbReference type="GO" id="GO:0061574">
    <property type="term" value="C:ASAP complex"/>
    <property type="evidence" value="ECO:0000314"/>
    <property type="project" value="UniProtKB"/>
</dbReference>
<dbReference type="GO" id="GO:0005829">
    <property type="term" value="C:cytosol"/>
    <property type="evidence" value="ECO:0000314"/>
    <property type="project" value="HPA"/>
</dbReference>
<dbReference type="GO" id="GO:0000118">
    <property type="term" value="C:histone deacetylase complex"/>
    <property type="evidence" value="ECO:0000304"/>
    <property type="project" value="ProtInc"/>
</dbReference>
<dbReference type="GO" id="GO:0016604">
    <property type="term" value="C:nuclear body"/>
    <property type="evidence" value="ECO:0000314"/>
    <property type="project" value="HPA"/>
</dbReference>
<dbReference type="GO" id="GO:0016607">
    <property type="term" value="C:nuclear speck"/>
    <property type="evidence" value="ECO:0000314"/>
    <property type="project" value="UniProtKB"/>
</dbReference>
<dbReference type="GO" id="GO:0005654">
    <property type="term" value="C:nucleoplasm"/>
    <property type="evidence" value="ECO:0000314"/>
    <property type="project" value="HPA"/>
</dbReference>
<dbReference type="GO" id="GO:0005634">
    <property type="term" value="C:nucleus"/>
    <property type="evidence" value="ECO:0000318"/>
    <property type="project" value="GO_Central"/>
</dbReference>
<dbReference type="GO" id="GO:0003723">
    <property type="term" value="F:RNA binding"/>
    <property type="evidence" value="ECO:0007005"/>
    <property type="project" value="UniProtKB"/>
</dbReference>
<dbReference type="GO" id="GO:0003714">
    <property type="term" value="F:transcription corepressor activity"/>
    <property type="evidence" value="ECO:0000318"/>
    <property type="project" value="GO_Central"/>
</dbReference>
<dbReference type="GO" id="GO:0006397">
    <property type="term" value="P:mRNA processing"/>
    <property type="evidence" value="ECO:0007669"/>
    <property type="project" value="UniProtKB-KW"/>
</dbReference>
<dbReference type="GO" id="GO:0045892">
    <property type="term" value="P:negative regulation of DNA-templated transcription"/>
    <property type="evidence" value="ECO:0000318"/>
    <property type="project" value="GO_Central"/>
</dbReference>
<dbReference type="GO" id="GO:0048025">
    <property type="term" value="P:negative regulation of mRNA splicing, via spliceosome"/>
    <property type="evidence" value="ECO:0000314"/>
    <property type="project" value="UniProtKB"/>
</dbReference>
<dbReference type="GO" id="GO:0043065">
    <property type="term" value="P:positive regulation of apoptotic process"/>
    <property type="evidence" value="ECO:0000314"/>
    <property type="project" value="UniProtKB"/>
</dbReference>
<dbReference type="GO" id="GO:0000381">
    <property type="term" value="P:regulation of alternative mRNA splicing, via spliceosome"/>
    <property type="evidence" value="ECO:0000314"/>
    <property type="project" value="UniProtKB"/>
</dbReference>
<dbReference type="GO" id="GO:0006357">
    <property type="term" value="P:regulation of transcription by RNA polymerase II"/>
    <property type="evidence" value="ECO:0000304"/>
    <property type="project" value="ProtInc"/>
</dbReference>
<dbReference type="GO" id="GO:0008380">
    <property type="term" value="P:RNA splicing"/>
    <property type="evidence" value="ECO:0007669"/>
    <property type="project" value="UniProtKB-KW"/>
</dbReference>
<dbReference type="FunFam" id="3.10.20.550:FF:000001">
    <property type="entry name" value="Histone deacetylase complex subunit SAP18"/>
    <property type="match status" value="1"/>
</dbReference>
<dbReference type="Gene3D" id="3.10.20.550">
    <property type="entry name" value="ASAP complex, SAP18 subunit"/>
    <property type="match status" value="1"/>
</dbReference>
<dbReference type="InterPro" id="IPR017250">
    <property type="entry name" value="Hist_deAcase_cplx_SAP18"/>
</dbReference>
<dbReference type="InterPro" id="IPR010516">
    <property type="entry name" value="SAP18"/>
</dbReference>
<dbReference type="InterPro" id="IPR042534">
    <property type="entry name" value="SAP18_sf"/>
</dbReference>
<dbReference type="PANTHER" id="PTHR13082:SF0">
    <property type="entry name" value="HISTONE DEACETYLASE COMPLEX SUBUNIT SAP18"/>
    <property type="match status" value="1"/>
</dbReference>
<dbReference type="PANTHER" id="PTHR13082">
    <property type="entry name" value="SAP18"/>
    <property type="match status" value="1"/>
</dbReference>
<dbReference type="Pfam" id="PF06487">
    <property type="entry name" value="SAP18"/>
    <property type="match status" value="1"/>
</dbReference>
<dbReference type="PIRSF" id="PIRSF037637">
    <property type="entry name" value="HDAC_SAP18"/>
    <property type="match status" value="1"/>
</dbReference>
<evidence type="ECO:0000256" key="1">
    <source>
        <dbReference type="SAM" id="MobiDB-lite"/>
    </source>
</evidence>
<evidence type="ECO:0000269" key="2">
    <source>
    </source>
</evidence>
<evidence type="ECO:0000269" key="3">
    <source>
    </source>
</evidence>
<evidence type="ECO:0000269" key="4">
    <source>
    </source>
</evidence>
<evidence type="ECO:0000269" key="5">
    <source>
    </source>
</evidence>
<evidence type="ECO:0000269" key="6">
    <source>
    </source>
</evidence>
<evidence type="ECO:0000269" key="7">
    <source>
    </source>
</evidence>
<evidence type="ECO:0000305" key="8"/>
<evidence type="ECO:0007744" key="9">
    <source>
    </source>
</evidence>
<evidence type="ECO:0007744" key="10">
    <source>
    </source>
</evidence>
<evidence type="ECO:0007744" key="11">
    <source>
    </source>
</evidence>
<evidence type="ECO:0007744" key="12">
    <source>
    </source>
</evidence>
<evidence type="ECO:0007744" key="13">
    <source>
    </source>
</evidence>
<evidence type="ECO:0007829" key="14">
    <source>
        <dbReference type="PDB" id="2HDE"/>
    </source>
</evidence>
<sequence>MAVESRVTQEEIKKEPEKPIDREKTCPLLLRVFTTNNGRHHRMDEFSRGNVPSSELQIYTWMDATLKELTSLVKEVYPEARKKGTHFNFAIVFTDVKRPGYRVKEIGSTMSGRKGTDDSMTLQSQKFQIGDYLDIAITPPNRAPPPSGRMRPY</sequence>
<organism>
    <name type="scientific">Homo sapiens</name>
    <name type="common">Human</name>
    <dbReference type="NCBI Taxonomy" id="9606"/>
    <lineage>
        <taxon>Eukaryota</taxon>
        <taxon>Metazoa</taxon>
        <taxon>Chordata</taxon>
        <taxon>Craniata</taxon>
        <taxon>Vertebrata</taxon>
        <taxon>Euteleostomi</taxon>
        <taxon>Mammalia</taxon>
        <taxon>Eutheria</taxon>
        <taxon>Euarchontoglires</taxon>
        <taxon>Primates</taxon>
        <taxon>Haplorrhini</taxon>
        <taxon>Catarrhini</taxon>
        <taxon>Hominidae</taxon>
        <taxon>Homo</taxon>
    </lineage>
</organism>
<feature type="initiator methionine" description="Removed" evidence="9">
    <location>
        <position position="1"/>
    </location>
</feature>
<feature type="chain" id="PRO_0000220975" description="Histone deacetylase complex subunit SAP18">
    <location>
        <begin position="2"/>
        <end position="153"/>
    </location>
</feature>
<feature type="region of interest" description="Disordered" evidence="1">
    <location>
        <begin position="1"/>
        <end position="20"/>
    </location>
</feature>
<feature type="region of interest" description="Involved in splicing regulation activity">
    <location>
        <begin position="93"/>
        <end position="153"/>
    </location>
</feature>
<feature type="compositionally biased region" description="Basic and acidic residues" evidence="1">
    <location>
        <begin position="7"/>
        <end position="20"/>
    </location>
</feature>
<feature type="modified residue" description="N-acetylalanine" evidence="9">
    <location>
        <position position="2"/>
    </location>
</feature>
<feature type="cross-link" description="Glycyl lysine isopeptide (Lys-Gly) (interchain with G-Cter in SUMO2)" evidence="10 11 12 13">
    <location>
        <position position="13"/>
    </location>
</feature>
<feature type="splice variant" id="VSP_060066" description="In isoform 2.">
    <original>M</original>
    <variation>MLAAGVGGQGERLAGRRRKM</variation>
    <location>
        <position position="1"/>
    </location>
</feature>
<feature type="mutagenesis site" description="Abolishes splicing regulation activity and interaction with RNPS1 and ACIN1; when associated with A-121." evidence="5">
    <original>D</original>
    <variation>A</variation>
    <location>
        <position position="118"/>
    </location>
</feature>
<feature type="mutagenesis site" description="Abolishes splicing regulation activity and interaction with RNPS1 and ACIN1; when associated with A-118." evidence="5">
    <original>T</original>
    <variation>A</variation>
    <location>
        <position position="121"/>
    </location>
</feature>
<feature type="mutagenesis site" description="No effect on splicing regulation activity." evidence="5">
    <original>K</original>
    <variation>A</variation>
    <location>
        <position position="126"/>
    </location>
</feature>
<feature type="sequence conflict" description="In Ref. 2; AAF21220." evidence="8" ref="2">
    <original>K</original>
    <variation>E</variation>
    <location>
        <position position="114"/>
    </location>
</feature>
<feature type="sequence conflict" description="In Ref. 9; AAH30836." evidence="8" ref="9">
    <original>P</original>
    <variation>T</variation>
    <location>
        <position position="146"/>
    </location>
</feature>
<feature type="turn" evidence="14">
    <location>
        <begin position="22"/>
        <end position="24"/>
    </location>
</feature>
<feature type="strand" evidence="14">
    <location>
        <begin position="28"/>
        <end position="37"/>
    </location>
</feature>
<feature type="helix" evidence="14">
    <location>
        <begin position="43"/>
        <end position="45"/>
    </location>
</feature>
<feature type="turn" evidence="14">
    <location>
        <begin position="52"/>
        <end position="54"/>
    </location>
</feature>
<feature type="strand" evidence="14">
    <location>
        <begin position="55"/>
        <end position="60"/>
    </location>
</feature>
<feature type="helix" evidence="14">
    <location>
        <begin position="66"/>
        <end position="76"/>
    </location>
</feature>
<feature type="helix" evidence="14">
    <location>
        <begin position="78"/>
        <end position="81"/>
    </location>
</feature>
<feature type="strand" evidence="14">
    <location>
        <begin position="86"/>
        <end position="91"/>
    </location>
</feature>
<feature type="strand" evidence="14">
    <location>
        <begin position="95"/>
        <end position="98"/>
    </location>
</feature>
<feature type="strand" evidence="14">
    <location>
        <begin position="104"/>
        <end position="112"/>
    </location>
</feature>
<feature type="helix" evidence="14">
    <location>
        <begin position="122"/>
        <end position="125"/>
    </location>
</feature>
<feature type="strand" evidence="14">
    <location>
        <begin position="132"/>
        <end position="138"/>
    </location>
</feature>
<feature type="strand" evidence="14">
    <location>
        <begin position="144"/>
        <end position="147"/>
    </location>
</feature>
<comment type="function">
    <text evidence="2 5 6 7">Component of the SIN3-repressing complex. Enhances the ability of SIN3-HDAC1-mediated transcriptional repression. When tethered to the promoter, it can direct the formation of a repressive complex to core histone proteins. Auxiliary component of the splicing-dependent multiprotein exon junction complex (EJC) deposited at splice junction on mRNAs. The EJC is a dynamic structure consisting of core proteins and several peripheral nuclear and cytoplasmic associated factors that join the complex only transiently either during EJC assembly or during subsequent mRNA metabolism. Component of the ASAP and PSAP complexes which bind RNA in a sequence-independent manner and are proposed to be recruited to the EJC prior to or during the splicing process and to regulate specific excision of introns in specific transcription subsets. The ASAP complex can inhibit mRNA processing during in vitro splicing reactions. The ASAP complex promotes apoptosis and is disassembled after induction of apoptosis. Involved in the splicing modulation of BCL2L1/Bcl-X (and probably other apoptotic genes); specifically inhibits the formation of proapoptotic isoforms such as Bcl-X(S); the activity is different from the established EJC assembly and function.</text>
</comment>
<comment type="subunit">
    <text evidence="2 3 4 5 7">Found in a mRNA splicing-dependent exon junction complex (EJC). Component of the heterotrimeric ASAP (apoptosis- and splicing-associated protein) and PSAP complexes consisting of RNPS1, SAP18 and either ACIN1 or PNN, respectively; the ASAP and PSAP complexes probably are formed mutually exclusive. For the ASAP complex, the association of SAP18 seems to require a preformed RNPS1:ACIN1 complex. Forms a complex with SIN3A and HDAC1. Interacts with SUFU.</text>
</comment>
<comment type="interaction">
    <interactant intactId="EBI-1044156">
        <id>O00422</id>
    </interactant>
    <interactant intactId="EBI-745369">
        <id>Q9H4E7</id>
        <label>DEF6</label>
    </interactant>
    <organismsDiffer>false</organismsDiffer>
    <experiments>3</experiments>
</comment>
<comment type="interaction">
    <interactant intactId="EBI-1044156">
        <id>O00422</id>
    </interactant>
    <interactant intactId="EBI-301834">
        <id>Q13547</id>
        <label>HDAC1</label>
    </interactant>
    <organismsDiffer>false</organismsDiffer>
    <experiments>2</experiments>
</comment>
<comment type="interaction">
    <interactant intactId="EBI-1044156">
        <id>O00422</id>
    </interactant>
    <interactant intactId="EBI-6509505">
        <id>Q0VD86</id>
        <label>INCA1</label>
    </interactant>
    <organismsDiffer>false</organismsDiffer>
    <experiments>3</experiments>
</comment>
<comment type="interaction">
    <interactant intactId="EBI-1044156">
        <id>O00422</id>
    </interactant>
    <interactant intactId="EBI-741158">
        <id>Q96HA8</id>
        <label>NTAQ1</label>
    </interactant>
    <organismsDiffer>false</organismsDiffer>
    <experiments>3</experiments>
</comment>
<comment type="interaction">
    <interactant intactId="EBI-1044156">
        <id>O00422</id>
    </interactant>
    <interactant intactId="EBI-681904">
        <id>Q9H307</id>
        <label>PNN</label>
    </interactant>
    <organismsDiffer>false</organismsDiffer>
    <experiments>4</experiments>
</comment>
<comment type="interaction">
    <interactant intactId="EBI-1044156">
        <id>O00422</id>
    </interactant>
    <interactant intactId="EBI-395290">
        <id>Q14498</id>
        <label>RBM39</label>
    </interactant>
    <organismsDiffer>false</organismsDiffer>
    <experiments>12</experiments>
</comment>
<comment type="interaction">
    <interactant intactId="EBI-1044156">
        <id>O00422</id>
    </interactant>
    <interactant intactId="EBI-6654703">
        <id>Q14498-3</id>
        <label>RBM39</label>
    </interactant>
    <organismsDiffer>false</organismsDiffer>
    <experiments>3</experiments>
</comment>
<comment type="subcellular location">
    <subcellularLocation>
        <location evidence="3">Nucleus</location>
    </subcellularLocation>
    <subcellularLocation>
        <location evidence="3">Cytoplasm</location>
    </subcellularLocation>
    <subcellularLocation>
        <location evidence="5">Nucleus speckle</location>
    </subcellularLocation>
    <text evidence="3 5">Shuttles between the nucleus and the cytoplasm (PubMed:16314458). Colocalizes with ACIN1 and SRSF2 in nuclear speckles (PubMed:20966198).</text>
</comment>
<comment type="alternative products">
    <event type="alternative initiation"/>
    <isoform>
        <id>O00422-1</id>
        <name>1</name>
        <sequence type="displayed"/>
    </isoform>
    <isoform>
        <id>O00422-2</id>
        <name>2</name>
        <sequence type="described" ref="VSP_060066"/>
    </isoform>
</comment>
<comment type="tissue specificity">
    <text>Ubiquitous.</text>
</comment>
<comment type="similarity">
    <text evidence="8">Belongs to the SAP18 family.</text>
</comment>
<gene>
    <name type="primary">SAP18</name>
    <name type="ORF">GIG38</name>
</gene>
<keyword id="KW-0002">3D-structure</keyword>
<keyword id="KW-0007">Acetylation</keyword>
<keyword id="KW-0024">Alternative initiation</keyword>
<keyword id="KW-0963">Cytoplasm</keyword>
<keyword id="KW-1017">Isopeptide bond</keyword>
<keyword id="KW-0507">mRNA processing</keyword>
<keyword id="KW-0508">mRNA splicing</keyword>
<keyword id="KW-0539">Nucleus</keyword>
<keyword id="KW-1267">Proteomics identification</keyword>
<keyword id="KW-1185">Reference proteome</keyword>
<keyword id="KW-0678">Repressor</keyword>
<keyword id="KW-0804">Transcription</keyword>
<keyword id="KW-0805">Transcription regulation</keyword>
<keyword id="KW-0832">Ubl conjugation</keyword>
<reference key="1">
    <citation type="journal article" date="1997" name="Cell">
        <title>Histone deacetylases and SAP18, a novel polypeptide, are components of a human Sin3 complex.</title>
        <authorList>
            <person name="Zhang Y."/>
            <person name="Iratni R."/>
            <person name="Erdjument-Bromage H."/>
            <person name="Tempst P."/>
            <person name="Reinberg D."/>
        </authorList>
    </citation>
    <scope>NUCLEOTIDE SEQUENCE [MRNA] (ISOFORM 1)</scope>
    <scope>FUNCTION</scope>
    <scope>INTERACTION WITH SIN3A AND HDAC1</scope>
</reference>
<reference key="2">
    <citation type="submission" date="1996-11" db="EMBL/GenBank/DDBJ databases">
        <title>Characterization of proteins interacting with CAMPGEF.</title>
        <authorList>
            <person name="Kawasaki H."/>
            <person name="Housman D.E."/>
            <person name="Graybiel A.M."/>
        </authorList>
    </citation>
    <scope>NUCLEOTIDE SEQUENCE [MRNA] (ISOFORM 1)</scope>
</reference>
<reference key="3">
    <citation type="submission" date="1999-05" db="EMBL/GenBank/DDBJ databases">
        <title>A catalogue of genes in the human dermal papilla cells as identified by expressed sequence tags.</title>
        <authorList>
            <person name="Kim M.K."/>
            <person name="Kim Y.H."/>
            <person name="Seo J.M."/>
            <person name="Lee H.M."/>
            <person name="Chung H.J."/>
            <person name="Sohn M.Y."/>
            <person name="Hwang S.Y."/>
            <person name="Im S.U."/>
            <person name="Jung E.J."/>
            <person name="Lee H.D."/>
            <person name="Kim J.C."/>
        </authorList>
    </citation>
    <scope>NUCLEOTIDE SEQUENCE [LARGE SCALE MRNA] (ISOFORM 1)</scope>
    <source>
        <tissue>Hair follicle dermal papilla</tissue>
    </source>
</reference>
<reference key="4">
    <citation type="submission" date="2004-02" db="EMBL/GenBank/DDBJ databases">
        <title>Identification of a human cell growth inhibiting gene.</title>
        <authorList>
            <person name="Kim J.W."/>
        </authorList>
    </citation>
    <scope>NUCLEOTIDE SEQUENCE [LARGE SCALE MRNA] (ISOFORM 1)</scope>
</reference>
<reference key="5">
    <citation type="submission" date="2004-06" db="EMBL/GenBank/DDBJ databases">
        <title>Cloning of human full open reading frames in Gateway(TM) system entry vector (pDONR201).</title>
        <authorList>
            <person name="Ebert L."/>
            <person name="Schick M."/>
            <person name="Neubert P."/>
            <person name="Schatten R."/>
            <person name="Henze S."/>
            <person name="Korn B."/>
        </authorList>
    </citation>
    <scope>NUCLEOTIDE SEQUENCE [LARGE SCALE MRNA] (ISOFORM 1)</scope>
</reference>
<reference key="6">
    <citation type="journal article" date="2004" name="Nat. Genet.">
        <title>Complete sequencing and characterization of 21,243 full-length human cDNAs.</title>
        <authorList>
            <person name="Ota T."/>
            <person name="Suzuki Y."/>
            <person name="Nishikawa T."/>
            <person name="Otsuki T."/>
            <person name="Sugiyama T."/>
            <person name="Irie R."/>
            <person name="Wakamatsu A."/>
            <person name="Hayashi K."/>
            <person name="Sato H."/>
            <person name="Nagai K."/>
            <person name="Kimura K."/>
            <person name="Makita H."/>
            <person name="Sekine M."/>
            <person name="Obayashi M."/>
            <person name="Nishi T."/>
            <person name="Shibahara T."/>
            <person name="Tanaka T."/>
            <person name="Ishii S."/>
            <person name="Yamamoto J."/>
            <person name="Saito K."/>
            <person name="Kawai Y."/>
            <person name="Isono Y."/>
            <person name="Nakamura Y."/>
            <person name="Nagahari K."/>
            <person name="Murakami K."/>
            <person name="Yasuda T."/>
            <person name="Iwayanagi T."/>
            <person name="Wagatsuma M."/>
            <person name="Shiratori A."/>
            <person name="Sudo H."/>
            <person name="Hosoiri T."/>
            <person name="Kaku Y."/>
            <person name="Kodaira H."/>
            <person name="Kondo H."/>
            <person name="Sugawara M."/>
            <person name="Takahashi M."/>
            <person name="Kanda K."/>
            <person name="Yokoi T."/>
            <person name="Furuya T."/>
            <person name="Kikkawa E."/>
            <person name="Omura Y."/>
            <person name="Abe K."/>
            <person name="Kamihara K."/>
            <person name="Katsuta N."/>
            <person name="Sato K."/>
            <person name="Tanikawa M."/>
            <person name="Yamazaki M."/>
            <person name="Ninomiya K."/>
            <person name="Ishibashi T."/>
            <person name="Yamashita H."/>
            <person name="Murakawa K."/>
            <person name="Fujimori K."/>
            <person name="Tanai H."/>
            <person name="Kimata M."/>
            <person name="Watanabe M."/>
            <person name="Hiraoka S."/>
            <person name="Chiba Y."/>
            <person name="Ishida S."/>
            <person name="Ono Y."/>
            <person name="Takiguchi S."/>
            <person name="Watanabe S."/>
            <person name="Yosida M."/>
            <person name="Hotuta T."/>
            <person name="Kusano J."/>
            <person name="Kanehori K."/>
            <person name="Takahashi-Fujii A."/>
            <person name="Hara H."/>
            <person name="Tanase T.-O."/>
            <person name="Nomura Y."/>
            <person name="Togiya S."/>
            <person name="Komai F."/>
            <person name="Hara R."/>
            <person name="Takeuchi K."/>
            <person name="Arita M."/>
            <person name="Imose N."/>
            <person name="Musashino K."/>
            <person name="Yuuki H."/>
            <person name="Oshima A."/>
            <person name="Sasaki N."/>
            <person name="Aotsuka S."/>
            <person name="Yoshikawa Y."/>
            <person name="Matsunawa H."/>
            <person name="Ichihara T."/>
            <person name="Shiohata N."/>
            <person name="Sano S."/>
            <person name="Moriya S."/>
            <person name="Momiyama H."/>
            <person name="Satoh N."/>
            <person name="Takami S."/>
            <person name="Terashima Y."/>
            <person name="Suzuki O."/>
            <person name="Nakagawa S."/>
            <person name="Senoh A."/>
            <person name="Mizoguchi H."/>
            <person name="Goto Y."/>
            <person name="Shimizu F."/>
            <person name="Wakebe H."/>
            <person name="Hishigaki H."/>
            <person name="Watanabe T."/>
            <person name="Sugiyama A."/>
            <person name="Takemoto M."/>
            <person name="Kawakami B."/>
            <person name="Yamazaki M."/>
            <person name="Watanabe K."/>
            <person name="Kumagai A."/>
            <person name="Itakura S."/>
            <person name="Fukuzumi Y."/>
            <person name="Fujimori Y."/>
            <person name="Komiyama M."/>
            <person name="Tashiro H."/>
            <person name="Tanigami A."/>
            <person name="Fujiwara T."/>
            <person name="Ono T."/>
            <person name="Yamada K."/>
            <person name="Fujii Y."/>
            <person name="Ozaki K."/>
            <person name="Hirao M."/>
            <person name="Ohmori Y."/>
            <person name="Kawabata A."/>
            <person name="Hikiji T."/>
            <person name="Kobatake N."/>
            <person name="Inagaki H."/>
            <person name="Ikema Y."/>
            <person name="Okamoto S."/>
            <person name="Okitani R."/>
            <person name="Kawakami T."/>
            <person name="Noguchi S."/>
            <person name="Itoh T."/>
            <person name="Shigeta K."/>
            <person name="Senba T."/>
            <person name="Matsumura K."/>
            <person name="Nakajima Y."/>
            <person name="Mizuno T."/>
            <person name="Morinaga M."/>
            <person name="Sasaki M."/>
            <person name="Togashi T."/>
            <person name="Oyama M."/>
            <person name="Hata H."/>
            <person name="Watanabe M."/>
            <person name="Komatsu T."/>
            <person name="Mizushima-Sugano J."/>
            <person name="Satoh T."/>
            <person name="Shirai Y."/>
            <person name="Takahashi Y."/>
            <person name="Nakagawa K."/>
            <person name="Okumura K."/>
            <person name="Nagase T."/>
            <person name="Nomura N."/>
            <person name="Kikuchi H."/>
            <person name="Masuho Y."/>
            <person name="Yamashita R."/>
            <person name="Nakai K."/>
            <person name="Yada T."/>
            <person name="Nakamura Y."/>
            <person name="Ohara O."/>
            <person name="Isogai T."/>
            <person name="Sugano S."/>
        </authorList>
    </citation>
    <scope>NUCLEOTIDE SEQUENCE [LARGE SCALE MRNA] (ISOFORM 1)</scope>
    <source>
        <tissue>Brain cortex</tissue>
    </source>
</reference>
<reference key="7">
    <citation type="journal article" date="2004" name="Nature">
        <title>The DNA sequence and analysis of human chromosome 13.</title>
        <authorList>
            <person name="Dunham A."/>
            <person name="Matthews L.H."/>
            <person name="Burton J."/>
            <person name="Ashurst J.L."/>
            <person name="Howe K.L."/>
            <person name="Ashcroft K.J."/>
            <person name="Beare D.M."/>
            <person name="Burford D.C."/>
            <person name="Hunt S.E."/>
            <person name="Griffiths-Jones S."/>
            <person name="Jones M.C."/>
            <person name="Keenan S.J."/>
            <person name="Oliver K."/>
            <person name="Scott C.E."/>
            <person name="Ainscough R."/>
            <person name="Almeida J.P."/>
            <person name="Ambrose K.D."/>
            <person name="Andrews D.T."/>
            <person name="Ashwell R.I.S."/>
            <person name="Babbage A.K."/>
            <person name="Bagguley C.L."/>
            <person name="Bailey J."/>
            <person name="Bannerjee R."/>
            <person name="Barlow K.F."/>
            <person name="Bates K."/>
            <person name="Beasley H."/>
            <person name="Bird C.P."/>
            <person name="Bray-Allen S."/>
            <person name="Brown A.J."/>
            <person name="Brown J.Y."/>
            <person name="Burrill W."/>
            <person name="Carder C."/>
            <person name="Carter N.P."/>
            <person name="Chapman J.C."/>
            <person name="Clamp M.E."/>
            <person name="Clark S.Y."/>
            <person name="Clarke G."/>
            <person name="Clee C.M."/>
            <person name="Clegg S.C."/>
            <person name="Cobley V."/>
            <person name="Collins J.E."/>
            <person name="Corby N."/>
            <person name="Coville G.J."/>
            <person name="Deloukas P."/>
            <person name="Dhami P."/>
            <person name="Dunham I."/>
            <person name="Dunn M."/>
            <person name="Earthrowl M.E."/>
            <person name="Ellington A.G."/>
            <person name="Faulkner L."/>
            <person name="Frankish A.G."/>
            <person name="Frankland J."/>
            <person name="French L."/>
            <person name="Garner P."/>
            <person name="Garnett J."/>
            <person name="Gilbert J.G.R."/>
            <person name="Gilson C.J."/>
            <person name="Ghori J."/>
            <person name="Grafham D.V."/>
            <person name="Gribble S.M."/>
            <person name="Griffiths C."/>
            <person name="Hall R.E."/>
            <person name="Hammond S."/>
            <person name="Harley J.L."/>
            <person name="Hart E.A."/>
            <person name="Heath P.D."/>
            <person name="Howden P.J."/>
            <person name="Huckle E.J."/>
            <person name="Hunt P.J."/>
            <person name="Hunt A.R."/>
            <person name="Johnson C."/>
            <person name="Johnson D."/>
            <person name="Kay M."/>
            <person name="Kimberley A.M."/>
            <person name="King A."/>
            <person name="Laird G.K."/>
            <person name="Langford C.J."/>
            <person name="Lawlor S."/>
            <person name="Leongamornlert D.A."/>
            <person name="Lloyd D.M."/>
            <person name="Lloyd C."/>
            <person name="Loveland J.E."/>
            <person name="Lovell J."/>
            <person name="Martin S."/>
            <person name="Mashreghi-Mohammadi M."/>
            <person name="McLaren S.J."/>
            <person name="McMurray A."/>
            <person name="Milne S."/>
            <person name="Moore M.J.F."/>
            <person name="Nickerson T."/>
            <person name="Palmer S.A."/>
            <person name="Pearce A.V."/>
            <person name="Peck A.I."/>
            <person name="Pelan S."/>
            <person name="Phillimore B."/>
            <person name="Porter K.M."/>
            <person name="Rice C.M."/>
            <person name="Searle S."/>
            <person name="Sehra H.K."/>
            <person name="Shownkeen R."/>
            <person name="Skuce C.D."/>
            <person name="Smith M."/>
            <person name="Steward C.A."/>
            <person name="Sycamore N."/>
            <person name="Tester J."/>
            <person name="Thomas D.W."/>
            <person name="Tracey A."/>
            <person name="Tromans A."/>
            <person name="Tubby B."/>
            <person name="Wall M."/>
            <person name="Wallis J.M."/>
            <person name="West A.P."/>
            <person name="Whitehead S.L."/>
            <person name="Willey D.L."/>
            <person name="Wilming L."/>
            <person name="Wray P.W."/>
            <person name="Wright M.W."/>
            <person name="Young L."/>
            <person name="Coulson A."/>
            <person name="Durbin R.M."/>
            <person name="Hubbard T."/>
            <person name="Sulston J.E."/>
            <person name="Beck S."/>
            <person name="Bentley D.R."/>
            <person name="Rogers J."/>
            <person name="Ross M.T."/>
        </authorList>
    </citation>
    <scope>NUCLEOTIDE SEQUENCE [LARGE SCALE GENOMIC DNA]</scope>
</reference>
<reference key="8">
    <citation type="submission" date="2005-07" db="EMBL/GenBank/DDBJ databases">
        <authorList>
            <person name="Mural R.J."/>
            <person name="Istrail S."/>
            <person name="Sutton G.G."/>
            <person name="Florea L."/>
            <person name="Halpern A.L."/>
            <person name="Mobarry C.M."/>
            <person name="Lippert R."/>
            <person name="Walenz B."/>
            <person name="Shatkay H."/>
            <person name="Dew I."/>
            <person name="Miller J.R."/>
            <person name="Flanigan M.J."/>
            <person name="Edwards N.J."/>
            <person name="Bolanos R."/>
            <person name="Fasulo D."/>
            <person name="Halldorsson B.V."/>
            <person name="Hannenhalli S."/>
            <person name="Turner R."/>
            <person name="Yooseph S."/>
            <person name="Lu F."/>
            <person name="Nusskern D.R."/>
            <person name="Shue B.C."/>
            <person name="Zheng X.H."/>
            <person name="Zhong F."/>
            <person name="Delcher A.L."/>
            <person name="Huson D.H."/>
            <person name="Kravitz S.A."/>
            <person name="Mouchard L."/>
            <person name="Reinert K."/>
            <person name="Remington K.A."/>
            <person name="Clark A.G."/>
            <person name="Waterman M.S."/>
            <person name="Eichler E.E."/>
            <person name="Adams M.D."/>
            <person name="Hunkapiller M.W."/>
            <person name="Myers E.W."/>
            <person name="Venter J.C."/>
        </authorList>
    </citation>
    <scope>NUCLEOTIDE SEQUENCE [LARGE SCALE GENOMIC DNA]</scope>
</reference>
<reference key="9">
    <citation type="journal article" date="2004" name="Genome Res.">
        <title>The status, quality, and expansion of the NIH full-length cDNA project: the Mammalian Gene Collection (MGC).</title>
        <authorList>
            <consortium name="The MGC Project Team"/>
        </authorList>
    </citation>
    <scope>NUCLEOTIDE SEQUENCE [LARGE SCALE MRNA] (ISOFORM 1)</scope>
    <source>
        <tissue>Hypothalamus</tissue>
    </source>
</reference>
<reference key="10">
    <citation type="journal article" date="2003" name="Mol. Cell. Biol.">
        <title>ASAP, a novel protein complex involved in RNA processing and apoptosis.</title>
        <authorList>
            <person name="Schwerk C."/>
            <person name="Prasad J."/>
            <person name="Degenhardt K."/>
            <person name="Erdjument-Bromage H."/>
            <person name="White E."/>
            <person name="Tempst P."/>
            <person name="Kidd V.J."/>
            <person name="Manley J.L."/>
            <person name="Lahti J.M."/>
            <person name="Reinberg D."/>
        </authorList>
    </citation>
    <scope>IDENTIFICATION IN THE ASAP COMPLEX</scope>
    <scope>FUNCTION OF THE ASAP COMPLEX</scope>
</reference>
<reference key="11">
    <citation type="journal article" date="2005" name="RNA">
        <title>Biochemical analysis of the EJC reveals two new factors and a stable tetrameric protein core.</title>
        <authorList>
            <person name="Tange T.O."/>
            <person name="Shibuya T."/>
            <person name="Jurica M.S."/>
            <person name="Moore M.J."/>
        </authorList>
    </citation>
    <scope>IDENTIFICATION IN A MRNA SPLICING-DEPENDENT EXON JUNCTION COMPLEX</scope>
    <scope>IDENTIFICATION IN THE ASAP COMPLEX</scope>
    <scope>SUBCELLULAR LOCATION</scope>
    <scope>IDENTIFICATION BY MASS SPECTROMETRY</scope>
</reference>
<reference key="12">
    <citation type="journal article" date="2009" name="Anal. Chem.">
        <title>Lys-N and trypsin cover complementary parts of the phosphoproteome in a refined SCX-based approach.</title>
        <authorList>
            <person name="Gauci S."/>
            <person name="Helbig A.O."/>
            <person name="Slijper M."/>
            <person name="Krijgsveld J."/>
            <person name="Heck A.J."/>
            <person name="Mohammed S."/>
        </authorList>
    </citation>
    <scope>ACETYLATION [LARGE SCALE ANALYSIS] AT ALA-2</scope>
    <scope>CLEAVAGE OF INITIATOR METHIONINE [LARGE SCALE ANALYSIS]</scope>
    <scope>IDENTIFICATION BY MASS SPECTROMETRY [LARGE SCALE ANALYSIS]</scope>
</reference>
<reference key="13">
    <citation type="journal article" date="2010" name="RNA">
        <title>Human SAP18 mediates assembly of a splicing regulatory multiprotein complex via its ubiquitin-like fold.</title>
        <authorList>
            <person name="Singh K.K."/>
            <person name="Erkelenz S."/>
            <person name="Rattay S."/>
            <person name="Dehof A.K."/>
            <person name="Hildebrandt A."/>
            <person name="Schulze-Osthoff K."/>
            <person name="Schaal H."/>
            <person name="Schwerk C."/>
        </authorList>
    </citation>
    <scope>FUNCTION</scope>
    <scope>SUBCELLULAR LOCATION</scope>
    <scope>INTERACTION WITH RNPS1 AND ACIN1</scope>
    <scope>MUTAGENESIS OF ASP-118; THR-121 AND LYS-126</scope>
</reference>
<reference key="14">
    <citation type="journal article" date="2011" name="BMC Syst. Biol.">
        <title>Initial characterization of the human central proteome.</title>
        <authorList>
            <person name="Burkard T.R."/>
            <person name="Planyavsky M."/>
            <person name="Kaupe I."/>
            <person name="Breitwieser F.P."/>
            <person name="Buerckstuemmer T."/>
            <person name="Bennett K.L."/>
            <person name="Superti-Furga G."/>
            <person name="Colinge J."/>
        </authorList>
    </citation>
    <scope>IDENTIFICATION BY MASS SPECTROMETRY [LARGE SCALE ANALYSIS]</scope>
</reference>
<reference key="15">
    <citation type="journal article" date="2012" name="Mol. Cell. Biol.">
        <title>Proteins associated with the exon junction complex also control the alternative splicing of apoptotic regulators.</title>
        <authorList>
            <person name="Michelle L."/>
            <person name="Cloutier A."/>
            <person name="Toutant J."/>
            <person name="Shkreta L."/>
            <person name="Thibault P."/>
            <person name="Durand M."/>
            <person name="Garneau D."/>
            <person name="Gendron D."/>
            <person name="Lapointe E."/>
            <person name="Couture S."/>
            <person name="Le Hir H."/>
            <person name="Klinck R."/>
            <person name="Elela S.A."/>
            <person name="Prinos P."/>
            <person name="Chabot B."/>
        </authorList>
    </citation>
    <scope>FUNCTION</scope>
</reference>
<reference key="16">
    <citation type="journal article" date="2014" name="Nat. Struct. Mol. Biol.">
        <title>Uncovering global SUMOylation signaling networks in a site-specific manner.</title>
        <authorList>
            <person name="Hendriks I.A."/>
            <person name="D'Souza R.C."/>
            <person name="Yang B."/>
            <person name="Verlaan-de Vries M."/>
            <person name="Mann M."/>
            <person name="Vertegaal A.C."/>
        </authorList>
    </citation>
    <scope>SUMOYLATION [LARGE SCALE ANALYSIS] AT LYS-13</scope>
    <scope>IDENTIFICATION BY MASS SPECTROMETRY [LARGE SCALE ANALYSIS]</scope>
</reference>
<reference key="17">
    <citation type="journal article" date="2015" name="Cell Rep.">
        <title>SUMO-2 orchestrates chromatin modifiers in response to DNA damage.</title>
        <authorList>
            <person name="Hendriks I.A."/>
            <person name="Treffers L.W."/>
            <person name="Verlaan-de Vries M."/>
            <person name="Olsen J.V."/>
            <person name="Vertegaal A.C."/>
        </authorList>
    </citation>
    <scope>SUMOYLATION [LARGE SCALE ANALYSIS] AT LYS-13</scope>
    <scope>IDENTIFICATION BY MASS SPECTROMETRY [LARGE SCALE ANALYSIS]</scope>
</reference>
<reference key="18">
    <citation type="journal article" date="2015" name="Mol. Cell. Proteomics">
        <title>System-wide analysis of SUMOylation dynamics in response to replication stress reveals novel small ubiquitin-like modified target proteins and acceptor lysines relevant for genome stability.</title>
        <authorList>
            <person name="Xiao Z."/>
            <person name="Chang J.G."/>
            <person name="Hendriks I.A."/>
            <person name="Sigurdsson J.O."/>
            <person name="Olsen J.V."/>
            <person name="Vertegaal A.C."/>
        </authorList>
    </citation>
    <scope>SUMOYLATION [LARGE SCALE ANALYSIS] AT LYS-13</scope>
    <scope>IDENTIFICATION BY MASS SPECTROMETRY [LARGE SCALE ANALYSIS]</scope>
</reference>
<reference key="19">
    <citation type="journal article" date="2017" name="Nat. Struct. Mol. Biol.">
        <title>Site-specific mapping of the human SUMO proteome reveals co-modification with phosphorylation.</title>
        <authorList>
            <person name="Hendriks I.A."/>
            <person name="Lyon D."/>
            <person name="Young C."/>
            <person name="Jensen L.J."/>
            <person name="Vertegaal A.C."/>
            <person name="Nielsen M.L."/>
        </authorList>
    </citation>
    <scope>SUMOYLATION [LARGE SCALE ANALYSIS] AT LYS-13</scope>
    <scope>IDENTIFICATION BY MASS SPECTROMETRY [LARGE SCALE ANALYSIS]</scope>
</reference>
<reference key="20">
    <citation type="journal article" date="2006" name="Biochemistry">
        <title>Structure of SAP18: a ubiquitin fold in histone deacetylase complex assembly.</title>
        <authorList>
            <person name="McCallum S.A."/>
            <person name="Bazan J.F."/>
            <person name="Merchant M."/>
            <person name="Yin J."/>
            <person name="Pan B."/>
            <person name="de Sauvage F.J."/>
            <person name="Fairbrother W.J."/>
        </authorList>
    </citation>
    <scope>STRUCTURE BY NMR OF 6-149</scope>
    <scope>INTERACTION WITH SUFU</scope>
</reference>